<organism>
    <name type="scientific">Bos taurus</name>
    <name type="common">Bovine</name>
    <dbReference type="NCBI Taxonomy" id="9913"/>
    <lineage>
        <taxon>Eukaryota</taxon>
        <taxon>Metazoa</taxon>
        <taxon>Chordata</taxon>
        <taxon>Craniata</taxon>
        <taxon>Vertebrata</taxon>
        <taxon>Euteleostomi</taxon>
        <taxon>Mammalia</taxon>
        <taxon>Eutheria</taxon>
        <taxon>Laurasiatheria</taxon>
        <taxon>Artiodactyla</taxon>
        <taxon>Ruminantia</taxon>
        <taxon>Pecora</taxon>
        <taxon>Bovidae</taxon>
        <taxon>Bovinae</taxon>
        <taxon>Bos</taxon>
    </lineage>
</organism>
<feature type="initiator methionine" description="Removed" evidence="2">
    <location>
        <position position="1"/>
    </location>
</feature>
<feature type="chain" id="PRO_0000278191" description="WD repeat-containing protein 5">
    <location>
        <begin position="2"/>
        <end position="334"/>
    </location>
</feature>
<feature type="repeat" description="WD 1">
    <location>
        <begin position="43"/>
        <end position="82"/>
    </location>
</feature>
<feature type="repeat" description="WD 2">
    <location>
        <begin position="85"/>
        <end position="126"/>
    </location>
</feature>
<feature type="repeat" description="WD 3">
    <location>
        <begin position="128"/>
        <end position="168"/>
    </location>
</feature>
<feature type="repeat" description="WD 4">
    <location>
        <begin position="169"/>
        <end position="208"/>
    </location>
</feature>
<feature type="repeat" description="WD 5">
    <location>
        <begin position="212"/>
        <end position="253"/>
    </location>
</feature>
<feature type="repeat" description="WD 6">
    <location>
        <begin position="256"/>
        <end position="296"/>
    </location>
</feature>
<feature type="repeat" description="WD 7">
    <location>
        <begin position="299"/>
        <end position="333"/>
    </location>
</feature>
<feature type="region of interest" description="Disordered" evidence="5">
    <location>
        <begin position="1"/>
        <end position="31"/>
    </location>
</feature>
<feature type="compositionally biased region" description="Basic and acidic residues" evidence="5">
    <location>
        <begin position="1"/>
        <end position="12"/>
    </location>
</feature>
<feature type="compositionally biased region" description="Polar residues" evidence="5">
    <location>
        <begin position="17"/>
        <end position="28"/>
    </location>
</feature>
<feature type="site" description="Important for interaction with histone H3" evidence="1">
    <location>
        <position position="107"/>
    </location>
</feature>
<feature type="site" description="Important for interaction with histone H3" evidence="1">
    <location>
        <position position="133"/>
    </location>
</feature>
<feature type="site" description="Important for interaction with histone H3" evidence="1">
    <location>
        <position position="263"/>
    </location>
</feature>
<feature type="site" description="Important for interaction with histone H3" evidence="1">
    <location>
        <position position="322"/>
    </location>
</feature>
<feature type="modified residue" description="N-acetylalanine" evidence="2">
    <location>
        <position position="2"/>
    </location>
</feature>
<feature type="modified residue" description="N6-acetyllysine" evidence="2">
    <location>
        <position position="112"/>
    </location>
</feature>
<feature type="cross-link" description="Glycyl lysine isopeptide (Lys-Gly) (interchain with G-Cter in SUMO2)" evidence="2">
    <location>
        <position position="7"/>
    </location>
</feature>
<feature type="cross-link" description="Glycyl lysine isopeptide (Lys-Gly) (interchain with G-Cter in SUMO2)" evidence="2">
    <location>
        <position position="27"/>
    </location>
</feature>
<feature type="cross-link" description="Glycyl lysine isopeptide (Lys-Gly) (interchain with G-Cter in SUMO2)" evidence="2">
    <location>
        <position position="46"/>
    </location>
</feature>
<name>WDR5_BOVIN</name>
<comment type="function">
    <text evidence="2 3">Contributes to histone modification (By similarity). May position the N-terminus of histone H3 for efficient trimethylation at 'Lys-4' (By similarity). As part of the MLL1/MLL complex it is involved in methylation and dimethylation at 'Lys-4' of histone H3 (By similarity). H3 'Lys-4' methylation represents a specific tag for epigenetic transcriptional activation (By similarity). As part of the NSL complex it may be involved in acetylation of nucleosomal histone H4 on several lysine residues (By similarity). May regulate osteoblasts differentiation (By similarity). In association with RBBP5 and ASH2L, stimulates the histone methyltransferase activities of KMT2A, KMT2B, KMT2C, KMT2D, SETD1A and SETD1B (By similarity).</text>
</comment>
<comment type="subunit">
    <text evidence="2 4">Interacts with PAXBP1; the interaction is direct and links a WDR5-containing histone methyltransferase complex to PAX7 and PAX3 (By similarity). Interacts with HCFC1 (By similarity). Component of the ATAC complex, a complex with histone acetyltransferase activity on histones H3 and H4 (By similarity). Component of the SET1 complex, at least composed of the catalytic subunit (SETD1A or SETD1B), WDR5, WDR82, RBBP5, ASH2L/ASH2, CXXC1/CFP1, HCFC1 and DPY30 (By similarity). Core component of several methyltransferase-containing complexes including MLL1/MLL, MLL2/3 (also named ASCOM complex) and MLL4/WBP7 (By similarity). Each complex is at least composed of ASH2L, RBBP5, WDR5, DPY30, one or more specific histone methyltransferases (KMT2A/MLL1, KMT2D/MLL2, KMT2C/MLL3 and KMT2B/MLL4), and the facultative components PAGR1, BACC1, CHD8, E2F6, HCFC1, HCFC2, HSP70, INO80C, KDM6A, KANSL1, LAS1L, MAX, MCRS1, MEN1, MGA, MYST1/MOF, NCOA6, PAXIP1/PTIP, PELP1, PHF20, PRP31, RING2, RUVB1/TIP49A, RUVB2/TIP49B, SENP3, TAF1, TAF4, TAF6, TAF7, TAF9, TEX10 and alpha- and beta-tubulin (By similarity). Component of the NSL complex at least composed of MOF/KAT8, KANSL1, KANSL2, KANSL3, MCRS1, PHF20, OGT1/OGT, WDR5 and HCFC1 (By similarity). Interacts with KMT2A/MLL1 (via WIN motif) and RBBP5; the interaction is direct (By similarity). Component ofthe ADA2A-containing complex (ATAC), composed of KAT14, KAT2A, TADA2L, TADA3L, ZZ3, MBIP, WDR5, YEATS2, CCDC101 and DR1 (By similarity). In the complex, it probably interacts directly with KAT2A, MBIP and KAT14 (By similarity). Interacts with histone H3 (By similarity). Interacts with SETD1A (via WIN motif) (By similarity). Component of a histone methylation complex composed of at least ZNF335, RBBP5, ASH2L and WDR5; the complex may have histone H3-specific methyltransferase activity, however does not have specificity for 'Lys-4' of histone H3 (By similarity). Interacts with ZNF335 (By similarity). Components of this complex may associate with components of the ZNF335-CCAR2-EMSY nuclear receptor-mediated transcription complex to form a complex at least composed of ZNF335, HCFC1, CCAR2, EMSY, MKI67, RBBP5, ASH2L and WDR5 (By similarity). Interacts with PER1 (By similarity). Interacts with KMT2B (via WIN motif), KMT2C (via WIN motif), KMT2D (via WIN motif) and SETD1B (via WIN motif) (By similarity).</text>
</comment>
<comment type="subcellular location">
    <subcellularLocation>
        <location evidence="1">Nucleus</location>
    </subcellularLocation>
</comment>
<comment type="similarity">
    <text evidence="6">Belongs to the WD repeat WDR5/wds family.</text>
</comment>
<gene>
    <name type="primary">WDR5</name>
</gene>
<proteinExistence type="evidence at transcript level"/>
<accession>Q2KIG2</accession>
<protein>
    <recommendedName>
        <fullName>WD repeat-containing protein 5</fullName>
    </recommendedName>
</protein>
<sequence>MATGEKKPETEAARAQPTPSSSATQSKPTPVKPNYALKFTLAGHTKAVSSVKFSPNGEWLASSSADKLIKIWGAYDGKFEKTISGHKLGISDVAWSSDSNLLVSASDDKTLKIWDVSSGKCLKTLKGHSNYVFCCNFNPQSNLIVSGSFDESVRIWDVKTGKCLKTLPAHSDPVSAVHFNRDGSLIVSSSYDGLCRIWDTASGQCLKTLIDDDNPPVSFVKFSPNGKYILAATLDNTLKLWDYSKGKCLKTYTGHKNEKYCIFANFSVTGGKWIVSGSEDNLVYIWNLQTKEIVQKLQGHTDVVISTACHPTENIIASAALENDKTIKLWKSDC</sequence>
<evidence type="ECO:0000250" key="1"/>
<evidence type="ECO:0000250" key="2">
    <source>
        <dbReference type="UniProtKB" id="P61964"/>
    </source>
</evidence>
<evidence type="ECO:0000250" key="3">
    <source>
        <dbReference type="UniProtKB" id="P61965"/>
    </source>
</evidence>
<evidence type="ECO:0000250" key="4">
    <source>
        <dbReference type="UniProtKB" id="Q498M4"/>
    </source>
</evidence>
<evidence type="ECO:0000256" key="5">
    <source>
        <dbReference type="SAM" id="MobiDB-lite"/>
    </source>
</evidence>
<evidence type="ECO:0000305" key="6"/>
<reference key="1">
    <citation type="submission" date="2006-01" db="EMBL/GenBank/DDBJ databases">
        <authorList>
            <consortium name="NIH - Mammalian Gene Collection (MGC) project"/>
        </authorList>
    </citation>
    <scope>NUCLEOTIDE SEQUENCE [LARGE SCALE MRNA]</scope>
    <source>
        <strain>Hereford</strain>
        <tissue>Testis</tissue>
    </source>
</reference>
<dbReference type="EMBL" id="BC112650">
    <property type="protein sequence ID" value="AAI12651.1"/>
    <property type="molecule type" value="mRNA"/>
</dbReference>
<dbReference type="RefSeq" id="NP_001098945.1">
    <property type="nucleotide sequence ID" value="NM_001105475.2"/>
</dbReference>
<dbReference type="SMR" id="Q2KIG2"/>
<dbReference type="FunCoup" id="Q2KIG2">
    <property type="interactions" value="1341"/>
</dbReference>
<dbReference type="STRING" id="9913.ENSBTAP00000061141"/>
<dbReference type="PaxDb" id="9913-ENSBTAP00000056448"/>
<dbReference type="GeneID" id="100125836"/>
<dbReference type="KEGG" id="bta:100125836"/>
<dbReference type="CTD" id="11091"/>
<dbReference type="eggNOG" id="KOG0266">
    <property type="taxonomic scope" value="Eukaryota"/>
</dbReference>
<dbReference type="InParanoid" id="Q2KIG2"/>
<dbReference type="OrthoDB" id="674604at2759"/>
<dbReference type="Proteomes" id="UP000009136">
    <property type="component" value="Unplaced"/>
</dbReference>
<dbReference type="GO" id="GO:0000123">
    <property type="term" value="C:histone acetyltransferase complex"/>
    <property type="evidence" value="ECO:0000250"/>
    <property type="project" value="UniProtKB"/>
</dbReference>
<dbReference type="GO" id="GO:0035097">
    <property type="term" value="C:histone methyltransferase complex"/>
    <property type="evidence" value="ECO:0000250"/>
    <property type="project" value="UniProtKB"/>
</dbReference>
<dbReference type="GO" id="GO:0071339">
    <property type="term" value="C:MLL1 complex"/>
    <property type="evidence" value="ECO:0000250"/>
    <property type="project" value="UniProtKB"/>
</dbReference>
<dbReference type="GO" id="GO:0005634">
    <property type="term" value="C:nucleus"/>
    <property type="evidence" value="ECO:0000250"/>
    <property type="project" value="UniProtKB"/>
</dbReference>
<dbReference type="GO" id="GO:0048188">
    <property type="term" value="C:Set1C/COMPASS complex"/>
    <property type="evidence" value="ECO:0000250"/>
    <property type="project" value="UniProtKB"/>
</dbReference>
<dbReference type="GO" id="GO:0042393">
    <property type="term" value="F:histone binding"/>
    <property type="evidence" value="ECO:0000318"/>
    <property type="project" value="GO_Central"/>
</dbReference>
<dbReference type="GO" id="GO:0140109">
    <property type="term" value="F:histone H3K4me1 reader activity"/>
    <property type="evidence" value="ECO:0000250"/>
    <property type="project" value="UniProtKB"/>
</dbReference>
<dbReference type="GO" id="GO:0045815">
    <property type="term" value="P:transcription initiation-coupled chromatin remodeling"/>
    <property type="evidence" value="ECO:0000250"/>
    <property type="project" value="UniProtKB"/>
</dbReference>
<dbReference type="CDD" id="cd00200">
    <property type="entry name" value="WD40"/>
    <property type="match status" value="1"/>
</dbReference>
<dbReference type="FunFam" id="2.130.10.10:FF:000029">
    <property type="entry name" value="WD repeat-containing protein 5"/>
    <property type="match status" value="1"/>
</dbReference>
<dbReference type="Gene3D" id="2.130.10.10">
    <property type="entry name" value="YVTN repeat-like/Quinoprotein amine dehydrogenase"/>
    <property type="match status" value="1"/>
</dbReference>
<dbReference type="InterPro" id="IPR020472">
    <property type="entry name" value="G-protein_beta_WD-40_rep"/>
</dbReference>
<dbReference type="InterPro" id="IPR015943">
    <property type="entry name" value="WD40/YVTN_repeat-like_dom_sf"/>
</dbReference>
<dbReference type="InterPro" id="IPR019775">
    <property type="entry name" value="WD40_repeat_CS"/>
</dbReference>
<dbReference type="InterPro" id="IPR036322">
    <property type="entry name" value="WD40_repeat_dom_sf"/>
</dbReference>
<dbReference type="InterPro" id="IPR001680">
    <property type="entry name" value="WD40_rpt"/>
</dbReference>
<dbReference type="PANTHER" id="PTHR22847:SF560">
    <property type="entry name" value="WD REPEAT-CONTAINING PROTEIN 5"/>
    <property type="match status" value="1"/>
</dbReference>
<dbReference type="PANTHER" id="PTHR22847">
    <property type="entry name" value="WD40 REPEAT PROTEIN"/>
    <property type="match status" value="1"/>
</dbReference>
<dbReference type="Pfam" id="PF25175">
    <property type="entry name" value="Beta-prop_WDR5"/>
    <property type="match status" value="1"/>
</dbReference>
<dbReference type="PIRSF" id="PIRSF002394">
    <property type="entry name" value="GN-bd_beta"/>
    <property type="match status" value="1"/>
</dbReference>
<dbReference type="PRINTS" id="PR00320">
    <property type="entry name" value="GPROTEINBRPT"/>
</dbReference>
<dbReference type="SMART" id="SM00320">
    <property type="entry name" value="WD40"/>
    <property type="match status" value="7"/>
</dbReference>
<dbReference type="SUPFAM" id="SSF50978">
    <property type="entry name" value="WD40 repeat-like"/>
    <property type="match status" value="1"/>
</dbReference>
<dbReference type="PROSITE" id="PS00678">
    <property type="entry name" value="WD_REPEATS_1"/>
    <property type="match status" value="4"/>
</dbReference>
<dbReference type="PROSITE" id="PS50082">
    <property type="entry name" value="WD_REPEATS_2"/>
    <property type="match status" value="6"/>
</dbReference>
<dbReference type="PROSITE" id="PS50294">
    <property type="entry name" value="WD_REPEATS_REGION"/>
    <property type="match status" value="1"/>
</dbReference>
<keyword id="KW-0007">Acetylation</keyword>
<keyword id="KW-0156">Chromatin regulator</keyword>
<keyword id="KW-1017">Isopeptide bond</keyword>
<keyword id="KW-0539">Nucleus</keyword>
<keyword id="KW-1185">Reference proteome</keyword>
<keyword id="KW-0677">Repeat</keyword>
<keyword id="KW-0804">Transcription</keyword>
<keyword id="KW-0805">Transcription regulation</keyword>
<keyword id="KW-0832">Ubl conjugation</keyword>
<keyword id="KW-0853">WD repeat</keyword>